<gene>
    <name evidence="1" type="primary">rsmH</name>
    <name type="synonym">mraW</name>
    <name type="ordered locus">VFMJ11_2321</name>
</gene>
<protein>
    <recommendedName>
        <fullName evidence="1">Ribosomal RNA small subunit methyltransferase H</fullName>
        <ecNumber evidence="1">2.1.1.199</ecNumber>
    </recommendedName>
    <alternativeName>
        <fullName evidence="1">16S rRNA m(4)C1402 methyltransferase</fullName>
    </alternativeName>
    <alternativeName>
        <fullName evidence="1">rRNA (cytosine-N(4)-)-methyltransferase RsmH</fullName>
    </alternativeName>
</protein>
<feature type="chain" id="PRO_0000387209" description="Ribosomal RNA small subunit methyltransferase H">
    <location>
        <begin position="1"/>
        <end position="316"/>
    </location>
</feature>
<feature type="binding site" evidence="1">
    <location>
        <begin position="35"/>
        <end position="37"/>
    </location>
    <ligand>
        <name>S-adenosyl-L-methionine</name>
        <dbReference type="ChEBI" id="CHEBI:59789"/>
    </ligand>
</feature>
<feature type="binding site" evidence="1">
    <location>
        <position position="55"/>
    </location>
    <ligand>
        <name>S-adenosyl-L-methionine</name>
        <dbReference type="ChEBI" id="CHEBI:59789"/>
    </ligand>
</feature>
<feature type="binding site" evidence="1">
    <location>
        <position position="79"/>
    </location>
    <ligand>
        <name>S-adenosyl-L-methionine</name>
        <dbReference type="ChEBI" id="CHEBI:59789"/>
    </ligand>
</feature>
<feature type="binding site" evidence="1">
    <location>
        <position position="101"/>
    </location>
    <ligand>
        <name>S-adenosyl-L-methionine</name>
        <dbReference type="ChEBI" id="CHEBI:59789"/>
    </ligand>
</feature>
<feature type="binding site" evidence="1">
    <location>
        <position position="108"/>
    </location>
    <ligand>
        <name>S-adenosyl-L-methionine</name>
        <dbReference type="ChEBI" id="CHEBI:59789"/>
    </ligand>
</feature>
<proteinExistence type="inferred from homology"/>
<sequence>MSEQFQHVSVLLHESIDGLAIKPDGIYIDGTFGRGGHSRQILSQLGENGRLYSIDRDPQAIAEAKTITDPKFTIIHGPFSGLKQYVEELELVGKIDGVLLDLGVSSPQLDDAERGFSFMKDGPLDMRMDPTSGIPVSQWLQEADVEDITWVIREFGEDKHAWRIAKGIVAYRENEENEPLTRTSQLAKLISEVAPKSFKEKKHPATRAFQAFRIYINSELDEIDTALKGALDVLAPEGRLSVISFHSLEDRMVKHFIRKESKGPQVPHGLPLTEEQIKALGSAKMKPVGKAIKPTKNEVDVNVRSRSSVLRIAERL</sequence>
<dbReference type="EC" id="2.1.1.199" evidence="1"/>
<dbReference type="EMBL" id="CP001139">
    <property type="protein sequence ID" value="ACH65498.1"/>
    <property type="molecule type" value="Genomic_DNA"/>
</dbReference>
<dbReference type="RefSeq" id="WP_012533096.1">
    <property type="nucleotide sequence ID" value="NC_011184.1"/>
</dbReference>
<dbReference type="SMR" id="B5FB43"/>
<dbReference type="KEGG" id="vfm:VFMJ11_2321"/>
<dbReference type="HOGENOM" id="CLU_038422_2_0_6"/>
<dbReference type="Proteomes" id="UP000001857">
    <property type="component" value="Chromosome I"/>
</dbReference>
<dbReference type="GO" id="GO:0005737">
    <property type="term" value="C:cytoplasm"/>
    <property type="evidence" value="ECO:0007669"/>
    <property type="project" value="UniProtKB-SubCell"/>
</dbReference>
<dbReference type="GO" id="GO:0071424">
    <property type="term" value="F:rRNA (cytosine-N4-)-methyltransferase activity"/>
    <property type="evidence" value="ECO:0007669"/>
    <property type="project" value="UniProtKB-UniRule"/>
</dbReference>
<dbReference type="GO" id="GO:0070475">
    <property type="term" value="P:rRNA base methylation"/>
    <property type="evidence" value="ECO:0007669"/>
    <property type="project" value="UniProtKB-UniRule"/>
</dbReference>
<dbReference type="FunFam" id="1.10.150.170:FF:000001">
    <property type="entry name" value="Ribosomal RNA small subunit methyltransferase H"/>
    <property type="match status" value="1"/>
</dbReference>
<dbReference type="Gene3D" id="1.10.150.170">
    <property type="entry name" value="Putative methyltransferase TM0872, insert domain"/>
    <property type="match status" value="1"/>
</dbReference>
<dbReference type="Gene3D" id="3.40.50.150">
    <property type="entry name" value="Vaccinia Virus protein VP39"/>
    <property type="match status" value="1"/>
</dbReference>
<dbReference type="HAMAP" id="MF_01007">
    <property type="entry name" value="16SrRNA_methyltr_H"/>
    <property type="match status" value="1"/>
</dbReference>
<dbReference type="InterPro" id="IPR002903">
    <property type="entry name" value="RsmH"/>
</dbReference>
<dbReference type="InterPro" id="IPR023397">
    <property type="entry name" value="SAM-dep_MeTrfase_MraW_recog"/>
</dbReference>
<dbReference type="InterPro" id="IPR029063">
    <property type="entry name" value="SAM-dependent_MTases_sf"/>
</dbReference>
<dbReference type="NCBIfam" id="TIGR00006">
    <property type="entry name" value="16S rRNA (cytosine(1402)-N(4))-methyltransferase RsmH"/>
    <property type="match status" value="1"/>
</dbReference>
<dbReference type="PANTHER" id="PTHR11265:SF0">
    <property type="entry name" value="12S RRNA N4-METHYLCYTIDINE METHYLTRANSFERASE"/>
    <property type="match status" value="1"/>
</dbReference>
<dbReference type="PANTHER" id="PTHR11265">
    <property type="entry name" value="S-ADENOSYL-METHYLTRANSFERASE MRAW"/>
    <property type="match status" value="1"/>
</dbReference>
<dbReference type="Pfam" id="PF01795">
    <property type="entry name" value="Methyltransf_5"/>
    <property type="match status" value="1"/>
</dbReference>
<dbReference type="PIRSF" id="PIRSF004486">
    <property type="entry name" value="MraW"/>
    <property type="match status" value="1"/>
</dbReference>
<dbReference type="SUPFAM" id="SSF81799">
    <property type="entry name" value="Putative methyltransferase TM0872, insert domain"/>
    <property type="match status" value="1"/>
</dbReference>
<dbReference type="SUPFAM" id="SSF53335">
    <property type="entry name" value="S-adenosyl-L-methionine-dependent methyltransferases"/>
    <property type="match status" value="1"/>
</dbReference>
<name>RSMH_ALIFM</name>
<comment type="function">
    <text evidence="1">Specifically methylates the N4 position of cytidine in position 1402 (C1402) of 16S rRNA.</text>
</comment>
<comment type="catalytic activity">
    <reaction evidence="1">
        <text>cytidine(1402) in 16S rRNA + S-adenosyl-L-methionine = N(4)-methylcytidine(1402) in 16S rRNA + S-adenosyl-L-homocysteine + H(+)</text>
        <dbReference type="Rhea" id="RHEA:42928"/>
        <dbReference type="Rhea" id="RHEA-COMP:10286"/>
        <dbReference type="Rhea" id="RHEA-COMP:10287"/>
        <dbReference type="ChEBI" id="CHEBI:15378"/>
        <dbReference type="ChEBI" id="CHEBI:57856"/>
        <dbReference type="ChEBI" id="CHEBI:59789"/>
        <dbReference type="ChEBI" id="CHEBI:74506"/>
        <dbReference type="ChEBI" id="CHEBI:82748"/>
        <dbReference type="EC" id="2.1.1.199"/>
    </reaction>
</comment>
<comment type="subcellular location">
    <subcellularLocation>
        <location evidence="1">Cytoplasm</location>
    </subcellularLocation>
</comment>
<comment type="similarity">
    <text evidence="1">Belongs to the methyltransferase superfamily. RsmH family.</text>
</comment>
<organism>
    <name type="scientific">Aliivibrio fischeri (strain MJ11)</name>
    <name type="common">Vibrio fischeri</name>
    <dbReference type="NCBI Taxonomy" id="388396"/>
    <lineage>
        <taxon>Bacteria</taxon>
        <taxon>Pseudomonadati</taxon>
        <taxon>Pseudomonadota</taxon>
        <taxon>Gammaproteobacteria</taxon>
        <taxon>Vibrionales</taxon>
        <taxon>Vibrionaceae</taxon>
        <taxon>Aliivibrio</taxon>
    </lineage>
</organism>
<accession>B5FB43</accession>
<keyword id="KW-0963">Cytoplasm</keyword>
<keyword id="KW-0489">Methyltransferase</keyword>
<keyword id="KW-0698">rRNA processing</keyword>
<keyword id="KW-0949">S-adenosyl-L-methionine</keyword>
<keyword id="KW-0808">Transferase</keyword>
<reference key="1">
    <citation type="submission" date="2008-08" db="EMBL/GenBank/DDBJ databases">
        <title>Complete sequence of Vibrio fischeri strain MJ11.</title>
        <authorList>
            <person name="Mandel M.J."/>
            <person name="Stabb E.V."/>
            <person name="Ruby E.G."/>
            <person name="Ferriera S."/>
            <person name="Johnson J."/>
            <person name="Kravitz S."/>
            <person name="Beeson K."/>
            <person name="Sutton G."/>
            <person name="Rogers Y.-H."/>
            <person name="Friedman R."/>
            <person name="Frazier M."/>
            <person name="Venter J.C."/>
        </authorList>
    </citation>
    <scope>NUCLEOTIDE SEQUENCE [LARGE SCALE GENOMIC DNA]</scope>
    <source>
        <strain>MJ11</strain>
    </source>
</reference>
<evidence type="ECO:0000255" key="1">
    <source>
        <dbReference type="HAMAP-Rule" id="MF_01007"/>
    </source>
</evidence>